<comment type="function">
    <text evidence="3">Hydrolyzes the sphingolipid ceramide into sphingosine and free fatty acid at an optimal pH of 3.0. Has no activity toward glycosphingolipids, such as GalCer and Galbeta1-3GalNAcbeta1-4(NeuAcalpha2-3)Galbeta1-4Glcbeta1-1'Cer or sphingomyelin.</text>
</comment>
<comment type="catalytic activity">
    <reaction>
        <text>an N-acylsphing-4-enine + H2O = sphing-4-enine + a fatty acid</text>
        <dbReference type="Rhea" id="RHEA:20856"/>
        <dbReference type="ChEBI" id="CHEBI:15377"/>
        <dbReference type="ChEBI" id="CHEBI:28868"/>
        <dbReference type="ChEBI" id="CHEBI:52639"/>
        <dbReference type="ChEBI" id="CHEBI:57756"/>
        <dbReference type="EC" id="3.5.1.23"/>
    </reaction>
</comment>
<comment type="biophysicochemical properties">
    <phDependence>
        <text evidence="3">Optimum pH is 3.0.</text>
    </phDependence>
</comment>
<comment type="subcellular location">
    <subcellularLocation>
        <location evidence="4">Secreted</location>
    </subcellularLocation>
</comment>
<comment type="miscellaneous">
    <text>In contrast to other members of the family, it displays a highest activity at acidic and not neutral pH.</text>
</comment>
<comment type="similarity">
    <text evidence="4">Belongs to the neutral ceramidase family.</text>
</comment>
<evidence type="ECO:0000250" key="1"/>
<evidence type="ECO:0000255" key="2"/>
<evidence type="ECO:0000269" key="3">
    <source>
    </source>
</evidence>
<evidence type="ECO:0000305" key="4"/>
<proteinExistence type="evidence at protein level"/>
<accession>Q54BK2</accession>
<accession>O15913</accession>
<accession>Q75WL6</accession>
<name>NCSEA_DICDI</name>
<sequence length="714" mass="78438">MKRSIVFIYSLVILLLSVGFIDAFKISIENHIKLSDDSSYQIGTGIYDITGPGAETNMMGYAMPGQITGGIHFRQRARAFVFIDSEGNRAVYVSTDSCMIFQEVKIQVIQDLQEIFGPTLYTHDNVLLSGTHTHSGPAGFSEYALYGITALGFYKKNFDTICDGIVQAIVKAHKSVQPARMLTQQGELWNSNINRSPYAYDNNPEEEKAMYDANVDKNMTVIRIEDMSGNPFAAISFFGVHCTSMNNTNHLISGDNKGYASYLWEKHANGQSSLPGTGPFIAAFGQSNEGDVSPNTRGPTCRDGKPCDYKTSTCNGKVEECWALGPGTDGDMFESTQIIGGNQFNKALELFNNATIQVSGKIQYRHTWKPFTNVSVEAPYNSGVEGATTCRGAMGYSFAGGTTDGPGAFNFIQGDNSTTNPFWNFIGGIIAKPTPQQTACQAPKPILIDVGMVEPIPWVPDVMPLQIITLGQIVLVAVPGEFTTMSGRRLRNTVREIIGQSIENPIVLIAGLANTYSGYIATFEEFQVQRYEGASTVFGPHTLGAYQQEFANLAQSIVDGSQADPGTFPRNMSGHTPFFLPPVIVDVAPKFDDFGDIYTDVSTTTPYSINQTVTVIFYGANLRNNFMTESSFLTVDQLQSNGQWTTILNDGDWDTKLYWKMHDLGFSLITVDWTISPITQPGTYRITHSGYAKKNPFSDNLTFYQGISSNFNVQ</sequence>
<keyword id="KW-0325">Glycoprotein</keyword>
<keyword id="KW-0378">Hydrolase</keyword>
<keyword id="KW-0443">Lipid metabolism</keyword>
<keyword id="KW-1185">Reference proteome</keyword>
<keyword id="KW-0964">Secreted</keyword>
<keyword id="KW-0732">Signal</keyword>
<keyword id="KW-0746">Sphingolipid metabolism</keyword>
<gene>
    <name type="primary">dcd2A</name>
    <name type="synonym">dcd</name>
    <name type="synonym">rsc25</name>
    <name type="ORF">DDB_G0293538</name>
</gene>
<feature type="signal peptide" evidence="2">
    <location>
        <begin position="1"/>
        <end position="23"/>
    </location>
</feature>
<feature type="chain" id="PRO_0000247108" description="Neutral ceramidase A">
    <location>
        <begin position="24"/>
        <end position="714"/>
    </location>
</feature>
<feature type="active site" description="Nucleophile" evidence="1">
    <location>
        <position position="293"/>
    </location>
</feature>
<feature type="glycosylation site" description="N-linked (GlcNAc...) asparagine" evidence="2">
    <location>
        <position position="218"/>
    </location>
</feature>
<feature type="glycosylation site" description="N-linked (GlcNAc...) asparagine" evidence="2">
    <location>
        <position position="246"/>
    </location>
</feature>
<feature type="glycosylation site" description="N-linked (GlcNAc...) asparagine" evidence="2">
    <location>
        <position position="353"/>
    </location>
</feature>
<feature type="glycosylation site" description="N-linked (GlcNAc...) asparagine" evidence="2">
    <location>
        <position position="373"/>
    </location>
</feature>
<feature type="glycosylation site" description="N-linked (GlcNAc...) asparagine" evidence="2">
    <location>
        <position position="416"/>
    </location>
</feature>
<feature type="glycosylation site" description="N-linked (GlcNAc...) asparagine" evidence="2">
    <location>
        <position position="571"/>
    </location>
</feature>
<feature type="glycosylation site" description="N-linked (GlcNAc...) asparagine" evidence="2">
    <location>
        <position position="610"/>
    </location>
</feature>
<feature type="glycosylation site" description="N-linked (GlcNAc...) asparagine" evidence="2">
    <location>
        <position position="700"/>
    </location>
</feature>
<organism>
    <name type="scientific">Dictyostelium discoideum</name>
    <name type="common">Social amoeba</name>
    <dbReference type="NCBI Taxonomy" id="44689"/>
    <lineage>
        <taxon>Eukaryota</taxon>
        <taxon>Amoebozoa</taxon>
        <taxon>Evosea</taxon>
        <taxon>Eumycetozoa</taxon>
        <taxon>Dictyostelia</taxon>
        <taxon>Dictyosteliales</taxon>
        <taxon>Dictyosteliaceae</taxon>
        <taxon>Dictyostelium</taxon>
    </lineage>
</organism>
<protein>
    <recommendedName>
        <fullName>Neutral ceramidase A</fullName>
        <shortName>N-CDase A</shortName>
        <shortName>NCDase A</shortName>
        <ecNumber>3.5.1.23</ecNumber>
    </recommendedName>
    <alternativeName>
        <fullName>Acylsphingosine deacylase 2A</fullName>
    </alternativeName>
    <alternativeName>
        <fullName>N-acylsphingosine amidohydrolase 2A</fullName>
    </alternativeName>
</protein>
<dbReference type="EC" id="3.5.1.23"/>
<dbReference type="EMBL" id="AB121061">
    <property type="protein sequence ID" value="BAC92751.1"/>
    <property type="molecule type" value="mRNA"/>
</dbReference>
<dbReference type="EMBL" id="AAFI02000218">
    <property type="protein sequence ID" value="EAL60581.1"/>
    <property type="molecule type" value="Genomic_DNA"/>
</dbReference>
<dbReference type="EMBL" id="U82513">
    <property type="protein sequence ID" value="AAB69633.1"/>
    <property type="molecule type" value="mRNA"/>
</dbReference>
<dbReference type="RefSeq" id="XP_629027.1">
    <property type="nucleotide sequence ID" value="XM_629025.1"/>
</dbReference>
<dbReference type="SMR" id="Q54BK2"/>
<dbReference type="FunCoup" id="Q54BK2">
    <property type="interactions" value="21"/>
</dbReference>
<dbReference type="STRING" id="44689.Q54BK2"/>
<dbReference type="GlyCosmos" id="Q54BK2">
    <property type="glycosylation" value="8 sites, No reported glycans"/>
</dbReference>
<dbReference type="GlyGen" id="Q54BK2">
    <property type="glycosylation" value="8 sites"/>
</dbReference>
<dbReference type="PaxDb" id="44689-DDB0215370"/>
<dbReference type="EnsemblProtists" id="EAL60581">
    <property type="protein sequence ID" value="EAL60581"/>
    <property type="gene ID" value="DDB_G0293538"/>
</dbReference>
<dbReference type="GeneID" id="8629313"/>
<dbReference type="KEGG" id="ddi:DDB_G0293538"/>
<dbReference type="dictyBase" id="DDB_G0293538">
    <property type="gene designation" value="dcd2A"/>
</dbReference>
<dbReference type="VEuPathDB" id="AmoebaDB:DDB_G0293538"/>
<dbReference type="eggNOG" id="KOG2232">
    <property type="taxonomic scope" value="Eukaryota"/>
</dbReference>
<dbReference type="HOGENOM" id="CLU_011300_2_0_1"/>
<dbReference type="InParanoid" id="Q54BK2"/>
<dbReference type="OMA" id="GTTVQTC"/>
<dbReference type="PhylomeDB" id="Q54BK2"/>
<dbReference type="Reactome" id="R-DDI-9840310">
    <property type="pathway name" value="Glycosphingolipid catabolism"/>
</dbReference>
<dbReference type="PRO" id="PR:Q54BK2"/>
<dbReference type="Proteomes" id="UP000002195">
    <property type="component" value="Chromosome 6"/>
</dbReference>
<dbReference type="GO" id="GO:0005576">
    <property type="term" value="C:extracellular region"/>
    <property type="evidence" value="ECO:0000318"/>
    <property type="project" value="GO_Central"/>
</dbReference>
<dbReference type="GO" id="GO:0016020">
    <property type="term" value="C:membrane"/>
    <property type="evidence" value="ECO:0007669"/>
    <property type="project" value="GOC"/>
</dbReference>
<dbReference type="GO" id="GO:0017040">
    <property type="term" value="F:N-acylsphingosine amidohydrolase activity"/>
    <property type="evidence" value="ECO:0000250"/>
    <property type="project" value="dictyBase"/>
</dbReference>
<dbReference type="GO" id="GO:0046514">
    <property type="term" value="P:ceramide catabolic process"/>
    <property type="evidence" value="ECO:0000318"/>
    <property type="project" value="GO_Central"/>
</dbReference>
<dbReference type="GO" id="GO:0006672">
    <property type="term" value="P:ceramide metabolic process"/>
    <property type="evidence" value="ECO:0000305"/>
    <property type="project" value="dictyBase"/>
</dbReference>
<dbReference type="GO" id="GO:0042759">
    <property type="term" value="P:long-chain fatty acid biosynthetic process"/>
    <property type="evidence" value="ECO:0000318"/>
    <property type="project" value="GO_Central"/>
</dbReference>
<dbReference type="GO" id="GO:0046512">
    <property type="term" value="P:sphingosine biosynthetic process"/>
    <property type="evidence" value="ECO:0000318"/>
    <property type="project" value="GO_Central"/>
</dbReference>
<dbReference type="Gene3D" id="2.60.40.2300">
    <property type="entry name" value="Neutral/alkaline non-lysosomal ceramidase, C-terminal domain"/>
    <property type="match status" value="1"/>
</dbReference>
<dbReference type="InterPro" id="IPR006823">
    <property type="entry name" value="Ceramidase_alk"/>
</dbReference>
<dbReference type="InterPro" id="IPR038445">
    <property type="entry name" value="NCDase_C_sf"/>
</dbReference>
<dbReference type="InterPro" id="IPR031331">
    <property type="entry name" value="NEUT/ALK_ceramidase_C"/>
</dbReference>
<dbReference type="InterPro" id="IPR031329">
    <property type="entry name" value="NEUT/ALK_ceramidase_N"/>
</dbReference>
<dbReference type="PANTHER" id="PTHR12670">
    <property type="entry name" value="CERAMIDASE"/>
    <property type="match status" value="1"/>
</dbReference>
<dbReference type="PANTHER" id="PTHR12670:SF1">
    <property type="entry name" value="NEUTRAL CERAMIDASE"/>
    <property type="match status" value="1"/>
</dbReference>
<dbReference type="Pfam" id="PF04734">
    <property type="entry name" value="Ceramidase_alk"/>
    <property type="match status" value="1"/>
</dbReference>
<dbReference type="Pfam" id="PF17048">
    <property type="entry name" value="Ceramidse_alk_C"/>
    <property type="match status" value="1"/>
</dbReference>
<reference key="1">
    <citation type="journal article" date="2003" name="Biochem. J.">
        <title>A neutral ceramidase homologue from Dictyostelium discoideum exhibits an acidic pH optimum.</title>
        <authorList>
            <person name="Monjusho H."/>
            <person name="Okino N."/>
            <person name="Tani M."/>
            <person name="Maeda M."/>
            <person name="Yoshida M."/>
            <person name="Ito M."/>
        </authorList>
    </citation>
    <scope>NUCLEOTIDE SEQUENCE [MRNA]</scope>
    <scope>FUNCTION</scope>
    <scope>BIOPHYSICOCHEMICAL PROPERTIES</scope>
    <source>
        <strain>AX4</strain>
    </source>
</reference>
<reference key="2">
    <citation type="journal article" date="2005" name="Nature">
        <title>The genome of the social amoeba Dictyostelium discoideum.</title>
        <authorList>
            <person name="Eichinger L."/>
            <person name="Pachebat J.A."/>
            <person name="Gloeckner G."/>
            <person name="Rajandream M.A."/>
            <person name="Sucgang R."/>
            <person name="Berriman M."/>
            <person name="Song J."/>
            <person name="Olsen R."/>
            <person name="Szafranski K."/>
            <person name="Xu Q."/>
            <person name="Tunggal B."/>
            <person name="Kummerfeld S."/>
            <person name="Madera M."/>
            <person name="Konfortov B.A."/>
            <person name="Rivero F."/>
            <person name="Bankier A.T."/>
            <person name="Lehmann R."/>
            <person name="Hamlin N."/>
            <person name="Davies R."/>
            <person name="Gaudet P."/>
            <person name="Fey P."/>
            <person name="Pilcher K."/>
            <person name="Chen G."/>
            <person name="Saunders D."/>
            <person name="Sodergren E.J."/>
            <person name="Davis P."/>
            <person name="Kerhornou A."/>
            <person name="Nie X."/>
            <person name="Hall N."/>
            <person name="Anjard C."/>
            <person name="Hemphill L."/>
            <person name="Bason N."/>
            <person name="Farbrother P."/>
            <person name="Desany B."/>
            <person name="Just E."/>
            <person name="Morio T."/>
            <person name="Rost R."/>
            <person name="Churcher C.M."/>
            <person name="Cooper J."/>
            <person name="Haydock S."/>
            <person name="van Driessche N."/>
            <person name="Cronin A."/>
            <person name="Goodhead I."/>
            <person name="Muzny D.M."/>
            <person name="Mourier T."/>
            <person name="Pain A."/>
            <person name="Lu M."/>
            <person name="Harper D."/>
            <person name="Lindsay R."/>
            <person name="Hauser H."/>
            <person name="James K.D."/>
            <person name="Quiles M."/>
            <person name="Madan Babu M."/>
            <person name="Saito T."/>
            <person name="Buchrieser C."/>
            <person name="Wardroper A."/>
            <person name="Felder M."/>
            <person name="Thangavelu M."/>
            <person name="Johnson D."/>
            <person name="Knights A."/>
            <person name="Loulseged H."/>
            <person name="Mungall K.L."/>
            <person name="Oliver K."/>
            <person name="Price C."/>
            <person name="Quail M.A."/>
            <person name="Urushihara H."/>
            <person name="Hernandez J."/>
            <person name="Rabbinowitsch E."/>
            <person name="Steffen D."/>
            <person name="Sanders M."/>
            <person name="Ma J."/>
            <person name="Kohara Y."/>
            <person name="Sharp S."/>
            <person name="Simmonds M.N."/>
            <person name="Spiegler S."/>
            <person name="Tivey A."/>
            <person name="Sugano S."/>
            <person name="White B."/>
            <person name="Walker D."/>
            <person name="Woodward J.R."/>
            <person name="Winckler T."/>
            <person name="Tanaka Y."/>
            <person name="Shaulsky G."/>
            <person name="Schleicher M."/>
            <person name="Weinstock G.M."/>
            <person name="Rosenthal A."/>
            <person name="Cox E.C."/>
            <person name="Chisholm R.L."/>
            <person name="Gibbs R.A."/>
            <person name="Loomis W.F."/>
            <person name="Platzer M."/>
            <person name="Kay R.R."/>
            <person name="Williams J.G."/>
            <person name="Dear P.H."/>
            <person name="Noegel A.A."/>
            <person name="Barrell B.G."/>
            <person name="Kuspa A."/>
        </authorList>
    </citation>
    <scope>NUCLEOTIDE SEQUENCE [LARGE SCALE GENOMIC DNA]</scope>
    <source>
        <strain>AX4</strain>
    </source>
</reference>
<reference key="3">
    <citation type="submission" date="1996-12" db="EMBL/GenBank/DDBJ databases">
        <title>A neutral ceramidase homologue of Dictyostelium discoideum exhibits an acidic pH optimum.</title>
        <authorList>
            <person name="Iranfar N."/>
            <person name="Loomis W.F."/>
        </authorList>
    </citation>
    <scope>NUCLEOTIDE SEQUENCE [MRNA] OF 13-714</scope>
    <source>
        <strain>AX4</strain>
    </source>
</reference>